<keyword id="KW-0029">Amino-acid transport</keyword>
<keyword id="KW-0472">Membrane</keyword>
<keyword id="KW-0597">Phosphoprotein</keyword>
<keyword id="KW-1185">Reference proteome</keyword>
<keyword id="KW-0812">Transmembrane</keyword>
<keyword id="KW-1133">Transmembrane helix</keyword>
<keyword id="KW-0813">Transport</keyword>
<keyword id="KW-0926">Vacuole</keyword>
<accession>P40074</accession>
<accession>D3DM25</accession>
<proteinExistence type="evidence at protein level"/>
<evidence type="ECO:0000255" key="1"/>
<evidence type="ECO:0000269" key="2">
    <source>
    </source>
</evidence>
<evidence type="ECO:0000305" key="3"/>
<evidence type="ECO:0007744" key="4">
    <source>
    </source>
</evidence>
<protein>
    <recommendedName>
        <fullName>Vacuolar amino acid transporter 6</fullName>
    </recommendedName>
</protein>
<name>AVT6_YEAST</name>
<dbReference type="EMBL" id="U18916">
    <property type="protein sequence ID" value="AAC03217.1"/>
    <property type="molecule type" value="Genomic_DNA"/>
</dbReference>
<dbReference type="EMBL" id="U15653">
    <property type="protein sequence ID" value="AAA61905.1"/>
    <property type="molecule type" value="Genomic_DNA"/>
</dbReference>
<dbReference type="EMBL" id="BK006939">
    <property type="protein sequence ID" value="DAA07779.1"/>
    <property type="molecule type" value="Genomic_DNA"/>
</dbReference>
<dbReference type="PIR" id="S50622">
    <property type="entry name" value="S50622"/>
</dbReference>
<dbReference type="RefSeq" id="NP_011044.1">
    <property type="nucleotide sequence ID" value="NM_001179009.1"/>
</dbReference>
<dbReference type="BioGRID" id="36864">
    <property type="interactions" value="59"/>
</dbReference>
<dbReference type="DIP" id="DIP-4489N"/>
<dbReference type="FunCoup" id="P40074">
    <property type="interactions" value="325"/>
</dbReference>
<dbReference type="IntAct" id="P40074">
    <property type="interactions" value="1"/>
</dbReference>
<dbReference type="STRING" id="4932.YER119C"/>
<dbReference type="TCDB" id="2.A.18.6.6">
    <property type="family name" value="the amino acid/auxin permease (aaap) family"/>
</dbReference>
<dbReference type="iPTMnet" id="P40074"/>
<dbReference type="PaxDb" id="4932-YER119C"/>
<dbReference type="PeptideAtlas" id="P40074"/>
<dbReference type="EnsemblFungi" id="YER119C_mRNA">
    <property type="protein sequence ID" value="YER119C"/>
    <property type="gene ID" value="YER119C"/>
</dbReference>
<dbReference type="GeneID" id="856855"/>
<dbReference type="KEGG" id="sce:YER119C"/>
<dbReference type="AGR" id="SGD:S000000921"/>
<dbReference type="SGD" id="S000000921">
    <property type="gene designation" value="AVT6"/>
</dbReference>
<dbReference type="VEuPathDB" id="FungiDB:YER119C"/>
<dbReference type="eggNOG" id="KOG1305">
    <property type="taxonomic scope" value="Eukaryota"/>
</dbReference>
<dbReference type="GeneTree" id="ENSGT00940000170090"/>
<dbReference type="HOGENOM" id="CLU_009020_1_1_1"/>
<dbReference type="InParanoid" id="P40074"/>
<dbReference type="OMA" id="DSIHHQR"/>
<dbReference type="OrthoDB" id="438545at2759"/>
<dbReference type="BioCyc" id="YEAST:G3O-30283-MONOMER"/>
<dbReference type="BioGRID-ORCS" id="856855">
    <property type="hits" value="0 hits in 10 CRISPR screens"/>
</dbReference>
<dbReference type="PRO" id="PR:P40074"/>
<dbReference type="Proteomes" id="UP000002311">
    <property type="component" value="Chromosome V"/>
</dbReference>
<dbReference type="RNAct" id="P40074">
    <property type="molecule type" value="protein"/>
</dbReference>
<dbReference type="GO" id="GO:0000324">
    <property type="term" value="C:fungal-type vacuole"/>
    <property type="evidence" value="ECO:0000314"/>
    <property type="project" value="SGD"/>
</dbReference>
<dbReference type="GO" id="GO:0000329">
    <property type="term" value="C:fungal-type vacuole membrane"/>
    <property type="evidence" value="ECO:0000314"/>
    <property type="project" value="SGD"/>
</dbReference>
<dbReference type="GO" id="GO:0061459">
    <property type="term" value="F:L-arginine transmembrane transporter activity"/>
    <property type="evidence" value="ECO:0000318"/>
    <property type="project" value="GO_Central"/>
</dbReference>
<dbReference type="GO" id="GO:0015183">
    <property type="term" value="F:L-aspartate transmembrane transporter activity"/>
    <property type="evidence" value="ECO:0000315"/>
    <property type="project" value="SGD"/>
</dbReference>
<dbReference type="GO" id="GO:0005313">
    <property type="term" value="F:L-glutamate transmembrane transporter activity"/>
    <property type="evidence" value="ECO:0000315"/>
    <property type="project" value="SGD"/>
</dbReference>
<dbReference type="GO" id="GO:0005290">
    <property type="term" value="F:L-histidine transmembrane transporter activity"/>
    <property type="evidence" value="ECO:0000318"/>
    <property type="project" value="GO_Central"/>
</dbReference>
<dbReference type="GO" id="GO:0015189">
    <property type="term" value="F:L-lysine transmembrane transporter activity"/>
    <property type="evidence" value="ECO:0000318"/>
    <property type="project" value="GO_Central"/>
</dbReference>
<dbReference type="GO" id="GO:0015194">
    <property type="term" value="F:L-serine transmembrane transporter activity"/>
    <property type="evidence" value="ECO:0000318"/>
    <property type="project" value="GO_Central"/>
</dbReference>
<dbReference type="GO" id="GO:0005302">
    <property type="term" value="F:L-tyrosine transmembrane transporter activity"/>
    <property type="evidence" value="ECO:0000318"/>
    <property type="project" value="GO_Central"/>
</dbReference>
<dbReference type="GO" id="GO:0032974">
    <property type="term" value="P:amino acid transmembrane export from vacuole"/>
    <property type="evidence" value="ECO:0000315"/>
    <property type="project" value="SGD"/>
</dbReference>
<dbReference type="GO" id="GO:0003333">
    <property type="term" value="P:amino acid transmembrane transport"/>
    <property type="evidence" value="ECO:0000318"/>
    <property type="project" value="GO_Central"/>
</dbReference>
<dbReference type="GO" id="GO:0055085">
    <property type="term" value="P:transmembrane transport"/>
    <property type="evidence" value="ECO:0000315"/>
    <property type="project" value="SGD"/>
</dbReference>
<dbReference type="InterPro" id="IPR013057">
    <property type="entry name" value="AA_transpt_TM"/>
</dbReference>
<dbReference type="PANTHER" id="PTHR22950">
    <property type="entry name" value="AMINO ACID TRANSPORTER"/>
    <property type="match status" value="1"/>
</dbReference>
<dbReference type="PANTHER" id="PTHR22950:SF678">
    <property type="entry name" value="VACUOLAR AMINO ACID TRANSPORTER 5-RELATED"/>
    <property type="match status" value="1"/>
</dbReference>
<dbReference type="Pfam" id="PF01490">
    <property type="entry name" value="Aa_trans"/>
    <property type="match status" value="1"/>
</dbReference>
<comment type="function">
    <text evidence="2">Involved in amino acid efflux from the vacuole to the cytoplasm. Capable of transporting aspartate and glutamate. Requires ATP for function.</text>
</comment>
<comment type="subcellular location">
    <subcellularLocation>
        <location evidence="2">Vacuole membrane</location>
        <topology evidence="2">Multi-pass membrane protein</topology>
    </subcellularLocation>
</comment>
<comment type="similarity">
    <text evidence="3">Belongs to the amino acid/polyamine transporter 2 family.</text>
</comment>
<sequence length="448" mass="48840">MVASIRSGVLTLLHTACGAGILAMPYAFKPFGLIPGVIMIVLCGACAMQSLFIQARVAKYVPQGRASFSALTRLINPNLGIVFDLAIAIKCFGVGVSYMIVVGDLMPQIMSVWTRNAWLLNRNVQISLIMLFFVAPLSFLKKLNSLRYASMVAISSVAYLCVLVLLHYVAPSDEILRLKGRISYLLPPQSHDLNVLNTLPIFVFAYTCHHNMFSIINEQRSSRFEHVMKIPLIAISLALILYIAIGCAGYLTFGDNIIGNIIMLYPQAVSSTIGRIAIVLLVMLAFPLQCHPARASIHQILQHFAEENVSISATSADEPTVATESSPLIRDSSLDLNEVIEEESIYQPKETPLRGKSFIVITCSILVASYLVAISVSSLARVLAIVGATGSTSISFILPGLFGYKLIGTEHKTAVPLTTKIFKYTGLLLFIWGLIIMITCLTAALKLN</sequence>
<organism>
    <name type="scientific">Saccharomyces cerevisiae (strain ATCC 204508 / S288c)</name>
    <name type="common">Baker's yeast</name>
    <dbReference type="NCBI Taxonomy" id="559292"/>
    <lineage>
        <taxon>Eukaryota</taxon>
        <taxon>Fungi</taxon>
        <taxon>Dikarya</taxon>
        <taxon>Ascomycota</taxon>
        <taxon>Saccharomycotina</taxon>
        <taxon>Saccharomycetes</taxon>
        <taxon>Saccharomycetales</taxon>
        <taxon>Saccharomycetaceae</taxon>
        <taxon>Saccharomyces</taxon>
    </lineage>
</organism>
<feature type="chain" id="PRO_0000093839" description="Vacuolar amino acid transporter 6">
    <location>
        <begin position="1"/>
        <end position="448"/>
    </location>
</feature>
<feature type="topological domain" description="Cytoplasmic" evidence="1">
    <location>
        <begin position="1"/>
        <end position="7"/>
    </location>
</feature>
<feature type="transmembrane region" description="Helical" evidence="1">
    <location>
        <begin position="8"/>
        <end position="28"/>
    </location>
</feature>
<feature type="topological domain" description="Vacuolar" evidence="1">
    <location>
        <begin position="29"/>
        <end position="32"/>
    </location>
</feature>
<feature type="transmembrane region" description="Helical" evidence="1">
    <location>
        <begin position="33"/>
        <end position="53"/>
    </location>
</feature>
<feature type="topological domain" description="Cytoplasmic" evidence="1">
    <location>
        <begin position="54"/>
        <end position="80"/>
    </location>
</feature>
<feature type="transmembrane region" description="Helical" evidence="1">
    <location>
        <begin position="81"/>
        <end position="101"/>
    </location>
</feature>
<feature type="topological domain" description="Vacuolar" evidence="1">
    <location>
        <begin position="102"/>
        <end position="125"/>
    </location>
</feature>
<feature type="transmembrane region" description="Helical" evidence="1">
    <location>
        <begin position="126"/>
        <end position="146"/>
    </location>
</feature>
<feature type="topological domain" description="Cytoplasmic" evidence="1">
    <location>
        <begin position="147"/>
        <end position="150"/>
    </location>
</feature>
<feature type="transmembrane region" description="Helical" evidence="1">
    <location>
        <begin position="151"/>
        <end position="171"/>
    </location>
</feature>
<feature type="topological domain" description="Vacuolar" evidence="1">
    <location>
        <begin position="172"/>
        <end position="195"/>
    </location>
</feature>
<feature type="transmembrane region" description="Helical" evidence="1">
    <location>
        <begin position="196"/>
        <end position="216"/>
    </location>
</feature>
<feature type="topological domain" description="Cytoplasmic" evidence="1">
    <location>
        <begin position="217"/>
        <end position="229"/>
    </location>
</feature>
<feature type="transmembrane region" description="Helical" evidence="1">
    <location>
        <begin position="230"/>
        <end position="250"/>
    </location>
</feature>
<feature type="topological domain" description="Vacuolar" evidence="1">
    <location>
        <begin position="251"/>
        <end position="267"/>
    </location>
</feature>
<feature type="transmembrane region" description="Helical" evidence="1">
    <location>
        <begin position="268"/>
        <end position="288"/>
    </location>
</feature>
<feature type="topological domain" description="Cytoplasmic" evidence="1">
    <location>
        <begin position="289"/>
        <end position="357"/>
    </location>
</feature>
<feature type="transmembrane region" description="Helical" evidence="1">
    <location>
        <begin position="358"/>
        <end position="378"/>
    </location>
</feature>
<feature type="topological domain" description="Vacuolar" evidence="1">
    <location>
        <begin position="379"/>
        <end position="381"/>
    </location>
</feature>
<feature type="transmembrane region" description="Helical" evidence="1">
    <location>
        <begin position="382"/>
        <end position="402"/>
    </location>
</feature>
<feature type="topological domain" description="Cytoplasmic" evidence="1">
    <location>
        <begin position="403"/>
        <end position="424"/>
    </location>
</feature>
<feature type="transmembrane region" description="Helical" evidence="1">
    <location>
        <begin position="425"/>
        <end position="445"/>
    </location>
</feature>
<feature type="topological domain" description="Vacuolar" evidence="1">
    <location>
        <begin position="446"/>
        <end position="448"/>
    </location>
</feature>
<feature type="modified residue" description="Phosphoserine" evidence="4">
    <location>
        <position position="344"/>
    </location>
</feature>
<gene>
    <name type="primary">AVT6</name>
    <name type="ordered locus">YER119C</name>
</gene>
<reference key="1">
    <citation type="journal article" date="1997" name="Nature">
        <title>The nucleotide sequence of Saccharomyces cerevisiae chromosome V.</title>
        <authorList>
            <person name="Dietrich F.S."/>
            <person name="Mulligan J.T."/>
            <person name="Hennessy K.M."/>
            <person name="Yelton M.A."/>
            <person name="Allen E."/>
            <person name="Araujo R."/>
            <person name="Aviles E."/>
            <person name="Berno A."/>
            <person name="Brennan T."/>
            <person name="Carpenter J."/>
            <person name="Chen E."/>
            <person name="Cherry J.M."/>
            <person name="Chung E."/>
            <person name="Duncan M."/>
            <person name="Guzman E."/>
            <person name="Hartzell G."/>
            <person name="Hunicke-Smith S."/>
            <person name="Hyman R.W."/>
            <person name="Kayser A."/>
            <person name="Komp C."/>
            <person name="Lashkari D."/>
            <person name="Lew H."/>
            <person name="Lin D."/>
            <person name="Mosedale D."/>
            <person name="Nakahara K."/>
            <person name="Namath A."/>
            <person name="Norgren R."/>
            <person name="Oefner P."/>
            <person name="Oh C."/>
            <person name="Petel F.X."/>
            <person name="Roberts D."/>
            <person name="Sehl P."/>
            <person name="Schramm S."/>
            <person name="Shogren T."/>
            <person name="Smith V."/>
            <person name="Taylor P."/>
            <person name="Wei Y."/>
            <person name="Botstein D."/>
            <person name="Davis R.W."/>
        </authorList>
    </citation>
    <scope>NUCLEOTIDE SEQUENCE [LARGE SCALE GENOMIC DNA]</scope>
    <source>
        <strain>ATCC 204508 / S288c</strain>
    </source>
</reference>
<reference key="2">
    <citation type="journal article" date="2014" name="G3 (Bethesda)">
        <title>The reference genome sequence of Saccharomyces cerevisiae: Then and now.</title>
        <authorList>
            <person name="Engel S.R."/>
            <person name="Dietrich F.S."/>
            <person name="Fisk D.G."/>
            <person name="Binkley G."/>
            <person name="Balakrishnan R."/>
            <person name="Costanzo M.C."/>
            <person name="Dwight S.S."/>
            <person name="Hitz B.C."/>
            <person name="Karra K."/>
            <person name="Nash R.S."/>
            <person name="Weng S."/>
            <person name="Wong E.D."/>
            <person name="Lloyd P."/>
            <person name="Skrzypek M.S."/>
            <person name="Miyasato S.R."/>
            <person name="Simison M."/>
            <person name="Cherry J.M."/>
        </authorList>
    </citation>
    <scope>GENOME REANNOTATION</scope>
    <source>
        <strain>ATCC 204508 / S288c</strain>
    </source>
</reference>
<reference key="3">
    <citation type="journal article" date="1995" name="Yeast">
        <title>Sequence, map position and genome organization of the RPL17B gene, encoding ribosomal protein L17b in Saccharomyces cerevisiae.</title>
        <authorList>
            <person name="Berroteran R.W."/>
            <person name="Hampsey M."/>
        </authorList>
    </citation>
    <scope>NUCLEOTIDE SEQUENCE [GENOMIC DNA] OF 270-448</scope>
</reference>
<reference key="4">
    <citation type="journal article" date="2001" name="J. Biol. Chem.">
        <title>A family of yeast proteins mediating bidirectional vacuolar amino acid transport.</title>
        <authorList>
            <person name="Russnak R."/>
            <person name="Konczal D."/>
            <person name="McIntire S.L."/>
        </authorList>
    </citation>
    <scope>FUNCTION</scope>
    <scope>SUBCELLULAR LOCATION</scope>
</reference>
<reference key="5">
    <citation type="journal article" date="2006" name="Proc. Natl. Acad. Sci. U.S.A.">
        <title>A global topology map of the Saccharomyces cerevisiae membrane proteome.</title>
        <authorList>
            <person name="Kim H."/>
            <person name="Melen K."/>
            <person name="Oesterberg M."/>
            <person name="von Heijne G."/>
        </authorList>
    </citation>
    <scope>TOPOLOGY [LARGE SCALE ANALYSIS]</scope>
    <source>
        <strain>ATCC 208353 / W303-1A</strain>
    </source>
</reference>
<reference key="6">
    <citation type="journal article" date="2008" name="Mol. Cell. Proteomics">
        <title>A multidimensional chromatography technology for in-depth phosphoproteome analysis.</title>
        <authorList>
            <person name="Albuquerque C.P."/>
            <person name="Smolka M.B."/>
            <person name="Payne S.H."/>
            <person name="Bafna V."/>
            <person name="Eng J."/>
            <person name="Zhou H."/>
        </authorList>
    </citation>
    <scope>IDENTIFICATION BY MASS SPECTROMETRY [LARGE SCALE ANALYSIS]</scope>
</reference>
<reference key="7">
    <citation type="journal article" date="2009" name="Science">
        <title>Global analysis of Cdk1 substrate phosphorylation sites provides insights into evolution.</title>
        <authorList>
            <person name="Holt L.J."/>
            <person name="Tuch B.B."/>
            <person name="Villen J."/>
            <person name="Johnson A.D."/>
            <person name="Gygi S.P."/>
            <person name="Morgan D.O."/>
        </authorList>
    </citation>
    <scope>PHOSPHORYLATION [LARGE SCALE ANALYSIS] AT SER-344</scope>
    <scope>IDENTIFICATION BY MASS SPECTROMETRY [LARGE SCALE ANALYSIS]</scope>
</reference>